<dbReference type="EMBL" id="X64346">
    <property type="protein sequence ID" value="CAA45694.1"/>
    <property type="molecule type" value="Genomic_DNA"/>
</dbReference>
<dbReference type="EMBL" id="M86409">
    <property type="protein sequence ID" value="AAA46147.1"/>
    <property type="molecule type" value="Genomic_DNA"/>
</dbReference>
<dbReference type="RefSeq" id="NP_040273.1">
    <property type="nucleotide sequence ID" value="NC_001350.1"/>
</dbReference>
<dbReference type="SMR" id="Q01044"/>
<dbReference type="KEGG" id="vg:1682510"/>
<dbReference type="Proteomes" id="UP000000587">
    <property type="component" value="Segment"/>
</dbReference>
<dbReference type="GO" id="GO:0042981">
    <property type="term" value="P:regulation of apoptotic process"/>
    <property type="evidence" value="ECO:0007669"/>
    <property type="project" value="InterPro"/>
</dbReference>
<dbReference type="Gene3D" id="1.10.533.10">
    <property type="entry name" value="Death Domain, Fas"/>
    <property type="match status" value="2"/>
</dbReference>
<dbReference type="InterPro" id="IPR011029">
    <property type="entry name" value="DEATH-like_dom_sf"/>
</dbReference>
<dbReference type="InterPro" id="IPR001875">
    <property type="entry name" value="DED_dom"/>
</dbReference>
<dbReference type="SMART" id="SM00031">
    <property type="entry name" value="DED"/>
    <property type="match status" value="1"/>
</dbReference>
<dbReference type="PROSITE" id="PS50168">
    <property type="entry name" value="DED"/>
    <property type="match status" value="2"/>
</dbReference>
<accession>Q01044</accession>
<name>VG71_SHV21</name>
<protein>
    <recommendedName>
        <fullName>Uncharacterized gene 71 protein</fullName>
    </recommendedName>
</protein>
<organism>
    <name type="scientific">Saimiriine herpesvirus 2 (strain 11)</name>
    <name type="common">SaHV-2</name>
    <name type="synonym">Herpesvirus saimiri</name>
    <dbReference type="NCBI Taxonomy" id="10383"/>
    <lineage>
        <taxon>Viruses</taxon>
        <taxon>Duplodnaviria</taxon>
        <taxon>Heunggongvirae</taxon>
        <taxon>Peploviricota</taxon>
        <taxon>Herviviricetes</taxon>
        <taxon>Herpesvirales</taxon>
        <taxon>Orthoherpesviridae</taxon>
        <taxon>Gammaherpesvirinae</taxon>
        <taxon>Rhadinovirus</taxon>
        <taxon>Rhadinovirus saimiriinegamma2</taxon>
        <taxon>Saimiriine herpesvirus 2</taxon>
    </lineage>
</organism>
<proteinExistence type="predicted"/>
<reference key="1">
    <citation type="journal article" date="1992" name="J. Virol.">
        <title>Primary structure of the herpesvirus saimiri genome.</title>
        <authorList>
            <person name="Albrecht J.-C."/>
            <person name="Nicholas J."/>
            <person name="Biller D."/>
            <person name="Cameron K.R."/>
            <person name="Biesinger B."/>
            <person name="Newman C."/>
            <person name="Wittmann S."/>
            <person name="Craxton M.A."/>
            <person name="Coleman H."/>
            <person name="Fleckenstein B."/>
            <person name="Honess R.W."/>
        </authorList>
    </citation>
    <scope>NUCLEOTIDE SEQUENCE [LARGE SCALE GENOMIC DNA]</scope>
</reference>
<reference key="2">
    <citation type="journal article" date="1992" name="Virology">
        <title>Analysis of nucleotide sequence of the rightmost 43 kbp of herpesvirus saimiri (HVS) L-DNA: general conservation of genetic organization between HVS and Epstein-Barr virus.</title>
        <authorList>
            <person name="Nicholas J."/>
            <person name="Cameron K.R."/>
            <person name="Coleman H."/>
            <person name="Newman C."/>
            <person name="Honess R.W."/>
        </authorList>
    </citation>
    <scope>NUCLEOTIDE SEQUENCE [GENOMIC DNA]</scope>
</reference>
<sequence>MDLKTTVLHITDSFTDEEMYCLLFLINGCIPRSCNAVNISDLIIETLSKSTQWDICLMQCLYVLRKIGLLLNLFQVTKEAVKQSFFTQPQLETHVLTLVNVNNNLTAKDEKRLCFILDQFFPRNVAAPSVILCVFSNMLCEMHVLECLCQLKKCLKQIGRSDLAKTV</sequence>
<keyword id="KW-1185">Reference proteome</keyword>
<keyword id="KW-0677">Repeat</keyword>
<organismHost>
    <name type="scientific">Saimiri sciureus</name>
    <name type="common">Common squirrel monkey</name>
    <dbReference type="NCBI Taxonomy" id="9521"/>
</organismHost>
<feature type="chain" id="PRO_0000191284" description="Uncharacterized gene 71 protein">
    <location>
        <begin position="1"/>
        <end position="167"/>
    </location>
</feature>
<feature type="domain" description="DED 1" evidence="1">
    <location>
        <begin position="2"/>
        <end position="75"/>
    </location>
</feature>
<feature type="domain" description="DED 2" evidence="1">
    <location>
        <begin position="93"/>
        <end position="167"/>
    </location>
</feature>
<evidence type="ECO:0000255" key="1">
    <source>
        <dbReference type="PROSITE-ProRule" id="PRU00065"/>
    </source>
</evidence>
<gene>
    <name type="primary">71</name>
    <name type="synonym">ECLF3</name>
</gene>